<proteinExistence type="inferred from homology"/>
<gene>
    <name evidence="1" type="primary">nadK2</name>
    <name type="ordered locus">Pro_1343</name>
</gene>
<evidence type="ECO:0000255" key="1">
    <source>
        <dbReference type="HAMAP-Rule" id="MF_00361"/>
    </source>
</evidence>
<protein>
    <recommendedName>
        <fullName evidence="1">NAD kinase 2</fullName>
        <ecNumber evidence="1">2.7.1.23</ecNumber>
    </recommendedName>
    <alternativeName>
        <fullName evidence="1">ATP-dependent NAD kinase 2</fullName>
    </alternativeName>
</protein>
<dbReference type="EC" id="2.7.1.23" evidence="1"/>
<dbReference type="EMBL" id="AE017126">
    <property type="protein sequence ID" value="AAQ00387.1"/>
    <property type="molecule type" value="Genomic_DNA"/>
</dbReference>
<dbReference type="RefSeq" id="NP_875734.1">
    <property type="nucleotide sequence ID" value="NC_005042.1"/>
</dbReference>
<dbReference type="RefSeq" id="WP_011125494.1">
    <property type="nucleotide sequence ID" value="NC_005042.1"/>
</dbReference>
<dbReference type="SMR" id="Q7VAW0"/>
<dbReference type="STRING" id="167539.Pro_1343"/>
<dbReference type="EnsemblBacteria" id="AAQ00387">
    <property type="protein sequence ID" value="AAQ00387"/>
    <property type="gene ID" value="Pro_1343"/>
</dbReference>
<dbReference type="KEGG" id="pma:Pro_1343"/>
<dbReference type="PATRIC" id="fig|167539.5.peg.1408"/>
<dbReference type="eggNOG" id="COG0061">
    <property type="taxonomic scope" value="Bacteria"/>
</dbReference>
<dbReference type="HOGENOM" id="CLU_008831_0_1_3"/>
<dbReference type="OrthoDB" id="9774737at2"/>
<dbReference type="Proteomes" id="UP000001420">
    <property type="component" value="Chromosome"/>
</dbReference>
<dbReference type="GO" id="GO:0005737">
    <property type="term" value="C:cytoplasm"/>
    <property type="evidence" value="ECO:0007669"/>
    <property type="project" value="UniProtKB-SubCell"/>
</dbReference>
<dbReference type="GO" id="GO:0005524">
    <property type="term" value="F:ATP binding"/>
    <property type="evidence" value="ECO:0007669"/>
    <property type="project" value="UniProtKB-KW"/>
</dbReference>
<dbReference type="GO" id="GO:0046872">
    <property type="term" value="F:metal ion binding"/>
    <property type="evidence" value="ECO:0007669"/>
    <property type="project" value="UniProtKB-UniRule"/>
</dbReference>
<dbReference type="GO" id="GO:0051287">
    <property type="term" value="F:NAD binding"/>
    <property type="evidence" value="ECO:0007669"/>
    <property type="project" value="UniProtKB-ARBA"/>
</dbReference>
<dbReference type="GO" id="GO:0003951">
    <property type="term" value="F:NAD+ kinase activity"/>
    <property type="evidence" value="ECO:0007669"/>
    <property type="project" value="UniProtKB-UniRule"/>
</dbReference>
<dbReference type="GO" id="GO:0019674">
    <property type="term" value="P:NAD metabolic process"/>
    <property type="evidence" value="ECO:0007669"/>
    <property type="project" value="InterPro"/>
</dbReference>
<dbReference type="GO" id="GO:0006741">
    <property type="term" value="P:NADP biosynthetic process"/>
    <property type="evidence" value="ECO:0007669"/>
    <property type="project" value="UniProtKB-UniRule"/>
</dbReference>
<dbReference type="Gene3D" id="3.40.50.10330">
    <property type="entry name" value="Probable inorganic polyphosphate/atp-NAD kinase, domain 1"/>
    <property type="match status" value="1"/>
</dbReference>
<dbReference type="Gene3D" id="2.60.200.30">
    <property type="entry name" value="Probable inorganic polyphosphate/atp-NAD kinase, domain 2"/>
    <property type="match status" value="1"/>
</dbReference>
<dbReference type="HAMAP" id="MF_00361">
    <property type="entry name" value="NAD_kinase"/>
    <property type="match status" value="1"/>
</dbReference>
<dbReference type="InterPro" id="IPR017438">
    <property type="entry name" value="ATP-NAD_kinase_N"/>
</dbReference>
<dbReference type="InterPro" id="IPR017437">
    <property type="entry name" value="ATP-NAD_kinase_PpnK-typ_C"/>
</dbReference>
<dbReference type="InterPro" id="IPR016064">
    <property type="entry name" value="NAD/diacylglycerol_kinase_sf"/>
</dbReference>
<dbReference type="InterPro" id="IPR002504">
    <property type="entry name" value="NADK"/>
</dbReference>
<dbReference type="NCBIfam" id="NF002732">
    <property type="entry name" value="PRK02649.1"/>
    <property type="match status" value="1"/>
</dbReference>
<dbReference type="PANTHER" id="PTHR20275">
    <property type="entry name" value="NAD KINASE"/>
    <property type="match status" value="1"/>
</dbReference>
<dbReference type="PANTHER" id="PTHR20275:SF13">
    <property type="entry name" value="NAD KINASE 2"/>
    <property type="match status" value="1"/>
</dbReference>
<dbReference type="Pfam" id="PF01513">
    <property type="entry name" value="NAD_kinase"/>
    <property type="match status" value="1"/>
</dbReference>
<dbReference type="Pfam" id="PF20143">
    <property type="entry name" value="NAD_kinase_C"/>
    <property type="match status" value="1"/>
</dbReference>
<dbReference type="SUPFAM" id="SSF111331">
    <property type="entry name" value="NAD kinase/diacylglycerol kinase-like"/>
    <property type="match status" value="1"/>
</dbReference>
<keyword id="KW-0067">ATP-binding</keyword>
<keyword id="KW-0963">Cytoplasm</keyword>
<keyword id="KW-0418">Kinase</keyword>
<keyword id="KW-0520">NAD</keyword>
<keyword id="KW-0521">NADP</keyword>
<keyword id="KW-0547">Nucleotide-binding</keyword>
<keyword id="KW-1185">Reference proteome</keyword>
<keyword id="KW-0808">Transferase</keyword>
<accession>Q7VAW0</accession>
<comment type="function">
    <text evidence="1">Involved in the regulation of the intracellular balance of NAD and NADP, and is a key enzyme in the biosynthesis of NADP. Catalyzes specifically the phosphorylation on 2'-hydroxyl of the adenosine moiety of NAD to yield NADP.</text>
</comment>
<comment type="catalytic activity">
    <reaction evidence="1">
        <text>NAD(+) + ATP = ADP + NADP(+) + H(+)</text>
        <dbReference type="Rhea" id="RHEA:18629"/>
        <dbReference type="ChEBI" id="CHEBI:15378"/>
        <dbReference type="ChEBI" id="CHEBI:30616"/>
        <dbReference type="ChEBI" id="CHEBI:57540"/>
        <dbReference type="ChEBI" id="CHEBI:58349"/>
        <dbReference type="ChEBI" id="CHEBI:456216"/>
        <dbReference type="EC" id="2.7.1.23"/>
    </reaction>
</comment>
<comment type="cofactor">
    <cofactor evidence="1">
        <name>a divalent metal cation</name>
        <dbReference type="ChEBI" id="CHEBI:60240"/>
    </cofactor>
</comment>
<comment type="subcellular location">
    <subcellularLocation>
        <location evidence="1">Cytoplasm</location>
    </subcellularLocation>
</comment>
<comment type="similarity">
    <text evidence="1">Belongs to the NAD kinase family.</text>
</comment>
<organism>
    <name type="scientific">Prochlorococcus marinus (strain SARG / CCMP1375 / SS120)</name>
    <dbReference type="NCBI Taxonomy" id="167539"/>
    <lineage>
        <taxon>Bacteria</taxon>
        <taxon>Bacillati</taxon>
        <taxon>Cyanobacteriota</taxon>
        <taxon>Cyanophyceae</taxon>
        <taxon>Synechococcales</taxon>
        <taxon>Prochlorococcaceae</taxon>
        <taxon>Prochlorococcus</taxon>
    </lineage>
</organism>
<feature type="chain" id="PRO_0000229667" description="NAD kinase 2">
    <location>
        <begin position="1"/>
        <end position="302"/>
    </location>
</feature>
<feature type="active site" description="Proton acceptor" evidence="1">
    <location>
        <position position="78"/>
    </location>
</feature>
<feature type="binding site" evidence="1">
    <location>
        <begin position="78"/>
        <end position="79"/>
    </location>
    <ligand>
        <name>NAD(+)</name>
        <dbReference type="ChEBI" id="CHEBI:57540"/>
    </ligand>
</feature>
<feature type="binding site" evidence="1">
    <location>
        <begin position="152"/>
        <end position="153"/>
    </location>
    <ligand>
        <name>NAD(+)</name>
        <dbReference type="ChEBI" id="CHEBI:57540"/>
    </ligand>
</feature>
<feature type="binding site" evidence="1">
    <location>
        <position position="182"/>
    </location>
    <ligand>
        <name>NAD(+)</name>
        <dbReference type="ChEBI" id="CHEBI:57540"/>
    </ligand>
</feature>
<feature type="binding site" evidence="1">
    <location>
        <begin position="193"/>
        <end position="198"/>
    </location>
    <ligand>
        <name>NAD(+)</name>
        <dbReference type="ChEBI" id="CHEBI:57540"/>
    </ligand>
</feature>
<feature type="binding site" evidence="1">
    <location>
        <position position="217"/>
    </location>
    <ligand>
        <name>NAD(+)</name>
        <dbReference type="ChEBI" id="CHEBI:57540"/>
    </ligand>
</feature>
<reference key="1">
    <citation type="journal article" date="2003" name="Proc. Natl. Acad. Sci. U.S.A.">
        <title>Genome sequence of the cyanobacterium Prochlorococcus marinus SS120, a nearly minimal oxyphototrophic genome.</title>
        <authorList>
            <person name="Dufresne A."/>
            <person name="Salanoubat M."/>
            <person name="Partensky F."/>
            <person name="Artiguenave F."/>
            <person name="Axmann I.M."/>
            <person name="Barbe V."/>
            <person name="Duprat S."/>
            <person name="Galperin M.Y."/>
            <person name="Koonin E.V."/>
            <person name="Le Gall F."/>
            <person name="Makarova K.S."/>
            <person name="Ostrowski M."/>
            <person name="Oztas S."/>
            <person name="Robert C."/>
            <person name="Rogozin I.B."/>
            <person name="Scanlan D.J."/>
            <person name="Tandeau de Marsac N."/>
            <person name="Weissenbach J."/>
            <person name="Wincker P."/>
            <person name="Wolf Y.I."/>
            <person name="Hess W.R."/>
        </authorList>
    </citation>
    <scope>NUCLEOTIDE SEQUENCE [LARGE SCALE GENOMIC DNA]</scope>
    <source>
        <strain>SARG / CCMP1375 / SS120</strain>
    </source>
</reference>
<name>NADK2_PROMA</name>
<sequence length="302" mass="32889">MPRLGLILNDGKELALKAALSIESKLEKSGYEVVRVSSSGGMVGFANPDQHMRTLGYNACVPEGFDPSMKLAIVLGGDGTVLSAARQTAPVGVPILTINTGHLGFLSEAYLPDIDKALEQVLASQWEIEERTSLVVSVMRGEQRRWEALCLNEMALHREPLTSMCHFEISIGRHAPVDISADGVILSTPTGSTAYSLSAGGPVITPDCPVLQLTPIAPHSLASRALVFSDLEPVTVFPATPERLMMVVDGTAGCYVWPEDRVLIRKSNHPVRFIRLTDHEFFQVLRKKLGWGLPHVAKPEKY</sequence>